<organism>
    <name type="scientific">Naja oxiana</name>
    <name type="common">Central Asian cobra</name>
    <name type="synonym">Oxus cobra</name>
    <dbReference type="NCBI Taxonomy" id="8657"/>
    <lineage>
        <taxon>Eukaryota</taxon>
        <taxon>Metazoa</taxon>
        <taxon>Chordata</taxon>
        <taxon>Craniata</taxon>
        <taxon>Vertebrata</taxon>
        <taxon>Euteleostomi</taxon>
        <taxon>Lepidosauria</taxon>
        <taxon>Squamata</taxon>
        <taxon>Bifurcata</taxon>
        <taxon>Unidentata</taxon>
        <taxon>Episquamata</taxon>
        <taxon>Toxicofera</taxon>
        <taxon>Serpentes</taxon>
        <taxon>Colubroidea</taxon>
        <taxon>Elapidae</taxon>
        <taxon>Elapinae</taxon>
        <taxon>Naja</taxon>
    </lineage>
</organism>
<sequence>NLYQFKNMIKCTVPSRSWLDFANYGCYCGRGGSGTPVDDLDRCCQIHDNCYNEAGKISGCWPYFKTYSYECSQGTLTCKGDNNSCAASVCDCDRLAAICFAGAPYNNDNYNINLKARCQ</sequence>
<comment type="function">
    <text>PLA2 catalyzes the calcium-dependent hydrolysis of the 2-acyl groups in 3-sn-phosphoglycerides.</text>
</comment>
<comment type="catalytic activity">
    <reaction evidence="2 3">
        <text>a 1,2-diacyl-sn-glycero-3-phosphocholine + H2O = a 1-acyl-sn-glycero-3-phosphocholine + a fatty acid + H(+)</text>
        <dbReference type="Rhea" id="RHEA:15801"/>
        <dbReference type="ChEBI" id="CHEBI:15377"/>
        <dbReference type="ChEBI" id="CHEBI:15378"/>
        <dbReference type="ChEBI" id="CHEBI:28868"/>
        <dbReference type="ChEBI" id="CHEBI:57643"/>
        <dbReference type="ChEBI" id="CHEBI:58168"/>
        <dbReference type="EC" id="3.1.1.4"/>
    </reaction>
</comment>
<comment type="cofactor">
    <cofactor evidence="1">
        <name>Ca(2+)</name>
        <dbReference type="ChEBI" id="CHEBI:29108"/>
    </cofactor>
    <text evidence="1">Binds 1 Ca(2+) ion.</text>
</comment>
<comment type="subcellular location">
    <subcellularLocation>
        <location>Secreted</location>
    </subcellularLocation>
</comment>
<comment type="tissue specificity">
    <text>Expressed by the venom gland.</text>
</comment>
<comment type="similarity">
    <text evidence="4">Belongs to the phospholipase A2 family. Group I subfamily. D49 sub-subfamily.</text>
</comment>
<name>PA2AE_NAJOX</name>
<evidence type="ECO:0000250" key="1"/>
<evidence type="ECO:0000255" key="2">
    <source>
        <dbReference type="PROSITE-ProRule" id="PRU10035"/>
    </source>
</evidence>
<evidence type="ECO:0000255" key="3">
    <source>
        <dbReference type="PROSITE-ProRule" id="PRU10036"/>
    </source>
</evidence>
<evidence type="ECO:0000305" key="4"/>
<feature type="chain" id="PRO_0000161670" description="Acidic phospholipase A2 E">
    <location>
        <begin position="1"/>
        <end position="119"/>
    </location>
</feature>
<feature type="active site" evidence="1">
    <location>
        <position position="47"/>
    </location>
</feature>
<feature type="active site" evidence="1">
    <location>
        <position position="93"/>
    </location>
</feature>
<feature type="binding site" evidence="1">
    <location>
        <position position="27"/>
    </location>
    <ligand>
        <name>Ca(2+)</name>
        <dbReference type="ChEBI" id="CHEBI:29108"/>
    </ligand>
</feature>
<feature type="binding site" evidence="1">
    <location>
        <position position="29"/>
    </location>
    <ligand>
        <name>Ca(2+)</name>
        <dbReference type="ChEBI" id="CHEBI:29108"/>
    </ligand>
</feature>
<feature type="binding site" evidence="1">
    <location>
        <position position="31"/>
    </location>
    <ligand>
        <name>Ca(2+)</name>
        <dbReference type="ChEBI" id="CHEBI:29108"/>
    </ligand>
</feature>
<feature type="binding site" evidence="1">
    <location>
        <position position="48"/>
    </location>
    <ligand>
        <name>Ca(2+)</name>
        <dbReference type="ChEBI" id="CHEBI:29108"/>
    </ligand>
</feature>
<feature type="disulfide bond" evidence="1">
    <location>
        <begin position="11"/>
        <end position="71"/>
    </location>
</feature>
<feature type="disulfide bond" evidence="1">
    <location>
        <begin position="26"/>
        <end position="118"/>
    </location>
</feature>
<feature type="disulfide bond" evidence="1">
    <location>
        <begin position="28"/>
        <end position="44"/>
    </location>
</feature>
<feature type="disulfide bond" evidence="1">
    <location>
        <begin position="43"/>
        <end position="99"/>
    </location>
</feature>
<feature type="disulfide bond" evidence="1">
    <location>
        <begin position="50"/>
        <end position="92"/>
    </location>
</feature>
<feature type="disulfide bond" evidence="1">
    <location>
        <begin position="60"/>
        <end position="85"/>
    </location>
</feature>
<feature type="disulfide bond" evidence="1">
    <location>
        <begin position="78"/>
        <end position="90"/>
    </location>
</feature>
<accession>P25498</accession>
<protein>
    <recommendedName>
        <fullName>Acidic phospholipase A2 E</fullName>
        <shortName>svPLA2</shortName>
        <ecNumber>3.1.1.4</ecNumber>
    </recommendedName>
    <alternativeName>
        <fullName>Phosphatidylcholine 2-acylhydrolase</fullName>
    </alternativeName>
</protein>
<proteinExistence type="evidence at protein level"/>
<reference key="1">
    <citation type="journal article" date="1979" name="Bioorg. Khim.">
        <title>Complete amino acid sequence of phospholipase A2 (isozyme E3) from the venom of middle Asian cobra Naja naja oxiana.</title>
        <authorList>
            <person name="Ovchinnikov Y.A."/>
            <person name="Miroshnikov A.I."/>
            <person name="Nazimov I.V."/>
            <person name="Apsalaon U.R."/>
            <person name="Soldatova L.N."/>
        </authorList>
    </citation>
    <scope>PROTEIN SEQUENCE</scope>
    <source>
        <tissue>Venom</tissue>
    </source>
</reference>
<keyword id="KW-0106">Calcium</keyword>
<keyword id="KW-0903">Direct protein sequencing</keyword>
<keyword id="KW-1015">Disulfide bond</keyword>
<keyword id="KW-0378">Hydrolase</keyword>
<keyword id="KW-0442">Lipid degradation</keyword>
<keyword id="KW-0443">Lipid metabolism</keyword>
<keyword id="KW-0479">Metal-binding</keyword>
<keyword id="KW-0964">Secreted</keyword>
<dbReference type="EC" id="3.1.1.4"/>
<dbReference type="PIR" id="JN0403">
    <property type="entry name" value="JN0403"/>
</dbReference>
<dbReference type="SMR" id="P25498"/>
<dbReference type="GO" id="GO:0005576">
    <property type="term" value="C:extracellular region"/>
    <property type="evidence" value="ECO:0007669"/>
    <property type="project" value="UniProtKB-SubCell"/>
</dbReference>
<dbReference type="GO" id="GO:0005509">
    <property type="term" value="F:calcium ion binding"/>
    <property type="evidence" value="ECO:0007669"/>
    <property type="project" value="InterPro"/>
</dbReference>
<dbReference type="GO" id="GO:0047498">
    <property type="term" value="F:calcium-dependent phospholipase A2 activity"/>
    <property type="evidence" value="ECO:0007669"/>
    <property type="project" value="TreeGrafter"/>
</dbReference>
<dbReference type="GO" id="GO:0005543">
    <property type="term" value="F:phospholipid binding"/>
    <property type="evidence" value="ECO:0007669"/>
    <property type="project" value="TreeGrafter"/>
</dbReference>
<dbReference type="GO" id="GO:0050482">
    <property type="term" value="P:arachidonate secretion"/>
    <property type="evidence" value="ECO:0007669"/>
    <property type="project" value="InterPro"/>
</dbReference>
<dbReference type="GO" id="GO:0016042">
    <property type="term" value="P:lipid catabolic process"/>
    <property type="evidence" value="ECO:0007669"/>
    <property type="project" value="UniProtKB-KW"/>
</dbReference>
<dbReference type="GO" id="GO:0006644">
    <property type="term" value="P:phospholipid metabolic process"/>
    <property type="evidence" value="ECO:0007669"/>
    <property type="project" value="InterPro"/>
</dbReference>
<dbReference type="CDD" id="cd00125">
    <property type="entry name" value="PLA2c"/>
    <property type="match status" value="1"/>
</dbReference>
<dbReference type="FunFam" id="1.20.90.10:FF:000007">
    <property type="entry name" value="Acidic phospholipase A2"/>
    <property type="match status" value="1"/>
</dbReference>
<dbReference type="Gene3D" id="1.20.90.10">
    <property type="entry name" value="Phospholipase A2 domain"/>
    <property type="match status" value="1"/>
</dbReference>
<dbReference type="InterPro" id="IPR001211">
    <property type="entry name" value="PLipase_A2"/>
</dbReference>
<dbReference type="InterPro" id="IPR033112">
    <property type="entry name" value="PLipase_A2_Asp_AS"/>
</dbReference>
<dbReference type="InterPro" id="IPR016090">
    <property type="entry name" value="PLipase_A2_dom"/>
</dbReference>
<dbReference type="InterPro" id="IPR036444">
    <property type="entry name" value="PLipase_A2_dom_sf"/>
</dbReference>
<dbReference type="InterPro" id="IPR033113">
    <property type="entry name" value="PLipase_A2_His_AS"/>
</dbReference>
<dbReference type="PANTHER" id="PTHR11716:SF94">
    <property type="entry name" value="PHOSPHOLIPASE A2"/>
    <property type="match status" value="1"/>
</dbReference>
<dbReference type="PANTHER" id="PTHR11716">
    <property type="entry name" value="PHOSPHOLIPASE A2 FAMILY MEMBER"/>
    <property type="match status" value="1"/>
</dbReference>
<dbReference type="Pfam" id="PF00068">
    <property type="entry name" value="Phospholip_A2_1"/>
    <property type="match status" value="1"/>
</dbReference>
<dbReference type="PRINTS" id="PR00389">
    <property type="entry name" value="PHPHLIPASEA2"/>
</dbReference>
<dbReference type="SMART" id="SM00085">
    <property type="entry name" value="PA2c"/>
    <property type="match status" value="1"/>
</dbReference>
<dbReference type="SUPFAM" id="SSF48619">
    <property type="entry name" value="Phospholipase A2, PLA2"/>
    <property type="match status" value="1"/>
</dbReference>
<dbReference type="PROSITE" id="PS00119">
    <property type="entry name" value="PA2_ASP"/>
    <property type="match status" value="1"/>
</dbReference>
<dbReference type="PROSITE" id="PS00118">
    <property type="entry name" value="PA2_HIS"/>
    <property type="match status" value="1"/>
</dbReference>